<accession>P80647</accession>
<evidence type="ECO:0000250" key="1"/>
<evidence type="ECO:0000250" key="2">
    <source>
        <dbReference type="UniProtKB" id="P00390"/>
    </source>
</evidence>
<evidence type="ECO:0000250" key="3">
    <source>
        <dbReference type="UniProtKB" id="P09622"/>
    </source>
</evidence>
<evidence type="ECO:0000255" key="4"/>
<evidence type="ECO:0000269" key="5">
    <source>
    </source>
</evidence>
<evidence type="ECO:0000303" key="6">
    <source>
    </source>
</evidence>
<evidence type="ECO:0000305" key="7"/>
<proteinExistence type="evidence at protein level"/>
<protein>
    <recommendedName>
        <fullName>Dihydrolipoyl dehydrogenase</fullName>
        <ecNumber>1.8.1.4</ecNumber>
    </recommendedName>
    <alternativeName>
        <fullName>Dihydrolipoamide dehydrogenase</fullName>
    </alternativeName>
</protein>
<organism>
    <name type="scientific">Hymenolepis diminuta</name>
    <name type="common">Rat tapeworm</name>
    <dbReference type="NCBI Taxonomy" id="6216"/>
    <lineage>
        <taxon>Eukaryota</taxon>
        <taxon>Metazoa</taxon>
        <taxon>Spiralia</taxon>
        <taxon>Lophotrochozoa</taxon>
        <taxon>Platyhelminthes</taxon>
        <taxon>Cestoda</taxon>
        <taxon>Eucestoda</taxon>
        <taxon>Cyclophyllidea</taxon>
        <taxon>Hymenolepididae</taxon>
        <taxon>Hymenolepis</taxon>
    </lineage>
</organism>
<name>DLDH_HYMDI</name>
<keyword id="KW-0903">Direct protein sequencing</keyword>
<keyword id="KW-1015">Disulfide bond</keyword>
<keyword id="KW-0274">FAD</keyword>
<keyword id="KW-0285">Flavoprotein</keyword>
<keyword id="KW-0496">Mitochondrion</keyword>
<keyword id="KW-0520">NAD</keyword>
<keyword id="KW-0560">Oxidoreductase</keyword>
<keyword id="KW-0676">Redox-active center</keyword>
<reference evidence="7" key="1">
    <citation type="journal article" date="1997" name="Exp. Parasitol.">
        <title>Hymenolepis diminuta: mitochondrial NADH --&gt; NAD transhydrogenation and the lipoamide dehydrogenase system.</title>
        <authorList>
            <person name="Walker D.J."/>
            <person name="Burkhart W."/>
            <person name="Fioravanti C.F."/>
        </authorList>
    </citation>
    <scope>PROTEIN SEQUENCE</scope>
    <scope>FUNCTION</scope>
    <scope>CATALYTIC ACTIVITY</scope>
    <scope>ACTIVITY REGULATION</scope>
    <scope>BIOPHYSICOCHEMICAL PROPERTIES</scope>
    <scope>SUBUNIT</scope>
    <scope>SUBCELLULAR LOCATION</scope>
    <source>
        <tissue evidence="5">Larva</tissue>
    </source>
</reference>
<comment type="function">
    <text evidence="3 5">Lipoamide dehydrogenase is a component of the glycine cleavage system as well as of the alpha-ketoacid dehydrogenase complexes (By similarity). This enzyme has lipoamide dehydrogenase activity and NADH -&gt; NAD transhydrogenation activity. Also displays some NADH-ferricyanide reductase and NADPH -&gt; NAD transydrogenation activities.</text>
</comment>
<comment type="catalytic activity">
    <reaction evidence="5">
        <text>N(6)-[(R)-dihydrolipoyl]-L-lysyl-[protein] + NAD(+) = N(6)-[(R)-lipoyl]-L-lysyl-[protein] + NADH + H(+)</text>
        <dbReference type="Rhea" id="RHEA:15045"/>
        <dbReference type="Rhea" id="RHEA-COMP:10474"/>
        <dbReference type="Rhea" id="RHEA-COMP:10475"/>
        <dbReference type="ChEBI" id="CHEBI:15378"/>
        <dbReference type="ChEBI" id="CHEBI:57540"/>
        <dbReference type="ChEBI" id="CHEBI:57945"/>
        <dbReference type="ChEBI" id="CHEBI:83099"/>
        <dbReference type="ChEBI" id="CHEBI:83100"/>
        <dbReference type="EC" id="1.8.1.4"/>
    </reaction>
</comment>
<comment type="cofactor">
    <cofactor evidence="2">
        <name>FAD</name>
        <dbReference type="ChEBI" id="CHEBI:57692"/>
    </cofactor>
    <text evidence="2">Binds 1 FAD per subunit.</text>
</comment>
<comment type="activity regulation">
    <text evidence="5">Lipoamide reduction and the NADH -&gt; NAD reaction are both completely inhibited by copper and cadmium ions.</text>
</comment>
<comment type="biophysicochemical properties">
    <kinetics>
        <KM evidence="5">0.09 mM for NADH for the NADH -&gt; NAD reaction</KM>
        <KM evidence="5">0.18 mM for NADH for the lipoamide dehydrogenase reaction</KM>
        <KM evidence="5">0.23 mM for AcPyAD for the NADH -&gt; NAD reaction</KM>
        <KM evidence="5">0.51 mM for lipoamide</KM>
    </kinetics>
    <phDependence>
        <text evidence="5">Optimum pH is 7.5 for NADH -&gt; NAD transhydrogenation, 6.5 for lipoamide reduction, 4.5 for NADPH -&gt; NAD transhydrogenation, and 6.5 for NADH-ferricyanide reduction.</text>
    </phDependence>
</comment>
<comment type="subunit">
    <text evidence="5">Homodimer.</text>
</comment>
<comment type="subcellular location">
    <subcellularLocation>
        <location evidence="5">Mitochondrion</location>
    </subcellularLocation>
</comment>
<comment type="miscellaneous">
    <text evidence="7">The active site is a redox-active disulfide bond.</text>
</comment>
<comment type="similarity">
    <text evidence="4">Belongs to the class-I pyridine nucleotide-disulfide oxidoreductase family.</text>
</comment>
<feature type="chain" id="PRO_0000311713" description="Dihydrolipoyl dehydrogenase">
    <location>
        <begin position="1"/>
        <end position="53" status="greater than"/>
    </location>
</feature>
<feature type="binding site" evidence="2">
    <location>
        <begin position="35"/>
        <end position="44"/>
    </location>
    <ligand>
        <name>FAD</name>
        <dbReference type="ChEBI" id="CHEBI:57692"/>
    </ligand>
</feature>
<feature type="binding site" evidence="1">
    <location>
        <position position="53"/>
    </location>
    <ligand>
        <name>FAD</name>
        <dbReference type="ChEBI" id="CHEBI:57692"/>
    </ligand>
</feature>
<feature type="disulfide bond" description="Redox-active" evidence="2">
    <location>
        <begin position="44"/>
        <end position="49"/>
    </location>
</feature>
<feature type="non-terminal residue" evidence="6">
    <location>
        <position position="53"/>
    </location>
</feature>
<dbReference type="EC" id="1.8.1.4"/>
<dbReference type="SMR" id="P80647"/>
<dbReference type="STRING" id="6216.P80647"/>
<dbReference type="GO" id="GO:0005739">
    <property type="term" value="C:mitochondrion"/>
    <property type="evidence" value="ECO:0007669"/>
    <property type="project" value="UniProtKB-SubCell"/>
</dbReference>
<dbReference type="GO" id="GO:0045252">
    <property type="term" value="C:oxoglutarate dehydrogenase complex"/>
    <property type="evidence" value="ECO:0007669"/>
    <property type="project" value="TreeGrafter"/>
</dbReference>
<dbReference type="GO" id="GO:0004148">
    <property type="term" value="F:dihydrolipoyl dehydrogenase (NADH) activity"/>
    <property type="evidence" value="ECO:0007669"/>
    <property type="project" value="UniProtKB-EC"/>
</dbReference>
<dbReference type="GO" id="GO:0050660">
    <property type="term" value="F:flavin adenine dinucleotide binding"/>
    <property type="evidence" value="ECO:0007669"/>
    <property type="project" value="TreeGrafter"/>
</dbReference>
<dbReference type="GO" id="GO:0006103">
    <property type="term" value="P:2-oxoglutarate metabolic process"/>
    <property type="evidence" value="ECO:0007669"/>
    <property type="project" value="TreeGrafter"/>
</dbReference>
<dbReference type="Gene3D" id="3.50.50.60">
    <property type="entry name" value="FAD/NAD(P)-binding domain"/>
    <property type="match status" value="1"/>
</dbReference>
<dbReference type="InterPro" id="IPR050151">
    <property type="entry name" value="Class-I_Pyr_Nuc-Dis_Oxidored"/>
</dbReference>
<dbReference type="InterPro" id="IPR036188">
    <property type="entry name" value="FAD/NAD-bd_sf"/>
</dbReference>
<dbReference type="InterPro" id="IPR023753">
    <property type="entry name" value="FAD/NAD-binding_dom"/>
</dbReference>
<dbReference type="InterPro" id="IPR012999">
    <property type="entry name" value="Pyr_OxRdtase_I_AS"/>
</dbReference>
<dbReference type="PANTHER" id="PTHR22912:SF151">
    <property type="entry name" value="DIHYDROLIPOYL DEHYDROGENASE, MITOCHONDRIAL"/>
    <property type="match status" value="1"/>
</dbReference>
<dbReference type="PANTHER" id="PTHR22912">
    <property type="entry name" value="DISULFIDE OXIDOREDUCTASE"/>
    <property type="match status" value="1"/>
</dbReference>
<dbReference type="Pfam" id="PF07992">
    <property type="entry name" value="Pyr_redox_2"/>
    <property type="match status" value="1"/>
</dbReference>
<dbReference type="PRINTS" id="PR00411">
    <property type="entry name" value="PNDRDTASEI"/>
</dbReference>
<dbReference type="SUPFAM" id="SSF51905">
    <property type="entry name" value="FAD/NAD(P)-binding domain"/>
    <property type="match status" value="1"/>
</dbReference>
<dbReference type="PROSITE" id="PS00076">
    <property type="entry name" value="PYRIDINE_REDOX_1"/>
    <property type="match status" value="1"/>
</dbReference>
<sequence>LSSGEKDLVVIGSGPGGYVAAIKAAQLGMLTVCIEKYPTFGGTCLNVGCIPSK</sequence>